<keyword id="KW-0067">ATP-binding</keyword>
<keyword id="KW-0235">DNA replication</keyword>
<keyword id="KW-0547">Nucleotide-binding</keyword>
<keyword id="KW-1185">Reference proteome</keyword>
<reference key="1">
    <citation type="journal article" date="2004" name="Science">
        <title>The 1.2-megabase genome sequence of Mimivirus.</title>
        <authorList>
            <person name="Raoult D."/>
            <person name="Audic S."/>
            <person name="Robert C."/>
            <person name="Abergel C."/>
            <person name="Renesto P."/>
            <person name="Ogata H."/>
            <person name="La Scola B."/>
            <person name="Susan M."/>
            <person name="Claverie J.-M."/>
        </authorList>
    </citation>
    <scope>NUCLEOTIDE SEQUENCE [LARGE SCALE GENOMIC DNA]</scope>
    <source>
        <strain>Rowbotham-Bradford</strain>
    </source>
</reference>
<comment type="function">
    <text evidence="1">Part of the RFC clamp loader complex which loads the PCNA sliding clamp onto DNA.</text>
</comment>
<comment type="similarity">
    <text evidence="4">Belongs to the activator 1 small subunits family. RfcS subfamily.</text>
</comment>
<accession>Q5UQE8</accession>
<dbReference type="EMBL" id="AY653733">
    <property type="protein sequence ID" value="AAV50744.1"/>
    <property type="molecule type" value="Genomic_DNA"/>
</dbReference>
<dbReference type="SMR" id="Q5UQE8"/>
<dbReference type="KEGG" id="vg:9925104"/>
<dbReference type="OrthoDB" id="6647at10239"/>
<dbReference type="Proteomes" id="UP000001134">
    <property type="component" value="Genome"/>
</dbReference>
<dbReference type="GO" id="GO:0005524">
    <property type="term" value="F:ATP binding"/>
    <property type="evidence" value="ECO:0007669"/>
    <property type="project" value="UniProtKB-KW"/>
</dbReference>
<dbReference type="GO" id="GO:0003677">
    <property type="term" value="F:DNA binding"/>
    <property type="evidence" value="ECO:0007669"/>
    <property type="project" value="InterPro"/>
</dbReference>
<dbReference type="GO" id="GO:0003689">
    <property type="term" value="F:DNA clamp loader activity"/>
    <property type="evidence" value="ECO:0007669"/>
    <property type="project" value="TreeGrafter"/>
</dbReference>
<dbReference type="GO" id="GO:0006281">
    <property type="term" value="P:DNA repair"/>
    <property type="evidence" value="ECO:0007669"/>
    <property type="project" value="TreeGrafter"/>
</dbReference>
<dbReference type="GO" id="GO:0006261">
    <property type="term" value="P:DNA-templated DNA replication"/>
    <property type="evidence" value="ECO:0007669"/>
    <property type="project" value="TreeGrafter"/>
</dbReference>
<dbReference type="CDD" id="cd00009">
    <property type="entry name" value="AAA"/>
    <property type="match status" value="1"/>
</dbReference>
<dbReference type="Gene3D" id="1.20.272.10">
    <property type="match status" value="1"/>
</dbReference>
<dbReference type="Gene3D" id="3.40.50.300">
    <property type="entry name" value="P-loop containing nucleotide triphosphate hydrolases"/>
    <property type="match status" value="1"/>
</dbReference>
<dbReference type="InterPro" id="IPR008921">
    <property type="entry name" value="DNA_pol3_clamp-load_cplx_C"/>
</dbReference>
<dbReference type="InterPro" id="IPR050238">
    <property type="entry name" value="DNA_Rep/Repair_Clamp_Loader"/>
</dbReference>
<dbReference type="InterPro" id="IPR027417">
    <property type="entry name" value="P-loop_NTPase"/>
</dbReference>
<dbReference type="PANTHER" id="PTHR11669">
    <property type="entry name" value="REPLICATION FACTOR C / DNA POLYMERASE III GAMMA-TAU SUBUNIT"/>
    <property type="match status" value="1"/>
</dbReference>
<dbReference type="PANTHER" id="PTHR11669:SF1">
    <property type="entry name" value="REPLICATION FACTOR C SUBUNIT 3"/>
    <property type="match status" value="1"/>
</dbReference>
<dbReference type="Pfam" id="PF13177">
    <property type="entry name" value="DNA_pol3_delta2"/>
    <property type="match status" value="1"/>
</dbReference>
<dbReference type="SUPFAM" id="SSF52540">
    <property type="entry name" value="P-loop containing nucleoside triphosphate hydrolases"/>
    <property type="match status" value="1"/>
</dbReference>
<dbReference type="SUPFAM" id="SSF48019">
    <property type="entry name" value="post-AAA+ oligomerization domain-like"/>
    <property type="match status" value="1"/>
</dbReference>
<feature type="chain" id="PRO_0000244773" description="Putative replication factor C small subunit L478">
    <location>
        <begin position="1"/>
        <end position="370"/>
    </location>
</feature>
<feature type="region of interest" description="Disordered" evidence="3">
    <location>
        <begin position="342"/>
        <end position="370"/>
    </location>
</feature>
<feature type="compositionally biased region" description="Basic and acidic residues" evidence="3">
    <location>
        <begin position="342"/>
        <end position="353"/>
    </location>
</feature>
<feature type="compositionally biased region" description="Basic residues" evidence="3">
    <location>
        <begin position="354"/>
        <end position="370"/>
    </location>
</feature>
<feature type="binding site" evidence="2">
    <location>
        <begin position="41"/>
        <end position="48"/>
    </location>
    <ligand>
        <name>ATP</name>
        <dbReference type="ChEBI" id="CHEBI:30616"/>
    </ligand>
</feature>
<proteinExistence type="inferred from homology"/>
<gene>
    <name type="ordered locus">MIMI_L478</name>
</gene>
<sequence>MFFFEKYRPKKPSDFLFNTDVLRQLKYLASNEDVPHIIISGPSGSGKKTLVKFLLEFLYDEDVNILRKRKYNINGSSTKKEIEILQSNYHIIIEPTSTNHDKYILQEIIKQYAMHKSFDIFKTKRKFKTIVIHNIENLANNSQAALRRTMERYAKTCRFIMVCNNLSKIMDPLRSRCRTFCVPLPTIENINTVVDYIAFMENIKLNKNDTKFILDNCNNNLKTAIWFLNCKGLNCSPFIALDEAFDLVVESILECRTGKNIFKIHNDIRTNIYNILITNIKGSEIINILVDKLIRKIDDDVINMNIIQYASKAEYNLTHGRRDITDIEYFISGVMQELVLNRNKEPEKSEKTKSKTGKLSRTNSKKTIKN</sequence>
<organismHost>
    <name type="scientific">Acanthamoeba polyphaga</name>
    <name type="common">Amoeba</name>
    <dbReference type="NCBI Taxonomy" id="5757"/>
</organismHost>
<evidence type="ECO:0000250" key="1"/>
<evidence type="ECO:0000255" key="2"/>
<evidence type="ECO:0000256" key="3">
    <source>
        <dbReference type="SAM" id="MobiDB-lite"/>
    </source>
</evidence>
<evidence type="ECO:0000305" key="4"/>
<protein>
    <recommendedName>
        <fullName>Putative replication factor C small subunit L478</fullName>
        <shortName>RFC small subunit L478</shortName>
    </recommendedName>
    <alternativeName>
        <fullName>Clamp loader small subunit L478</fullName>
    </alternativeName>
</protein>
<name>RFCS2_MIMIV</name>
<organism>
    <name type="scientific">Acanthamoeba polyphaga mimivirus</name>
    <name type="common">APMV</name>
    <dbReference type="NCBI Taxonomy" id="212035"/>
    <lineage>
        <taxon>Viruses</taxon>
        <taxon>Varidnaviria</taxon>
        <taxon>Bamfordvirae</taxon>
        <taxon>Nucleocytoviricota</taxon>
        <taxon>Megaviricetes</taxon>
        <taxon>Imitervirales</taxon>
        <taxon>Mimiviridae</taxon>
        <taxon>Megamimivirinae</taxon>
        <taxon>Mimivirus</taxon>
        <taxon>Mimivirus bradfordmassiliense</taxon>
    </lineage>
</organism>